<sequence>HLLQFRKMIKKMTGKEPIVSYAFYGCYCGKGGRGKPKDATDRCCFVHDCCYEKVTGCDPKWSYYTYSLENGDIVCGGDPYCTKVKCECDKKAAICFRDNLKTYKNRYMTFPDIFCTDPTEGC</sequence>
<organism>
    <name type="scientific">Protobothrops flavoviridis</name>
    <name type="common">Habu</name>
    <name type="synonym">Trimeresurus flavoviridis</name>
    <dbReference type="NCBI Taxonomy" id="88087"/>
    <lineage>
        <taxon>Eukaryota</taxon>
        <taxon>Metazoa</taxon>
        <taxon>Chordata</taxon>
        <taxon>Craniata</taxon>
        <taxon>Vertebrata</taxon>
        <taxon>Euteleostomi</taxon>
        <taxon>Lepidosauria</taxon>
        <taxon>Squamata</taxon>
        <taxon>Bifurcata</taxon>
        <taxon>Unidentata</taxon>
        <taxon>Episquamata</taxon>
        <taxon>Toxicofera</taxon>
        <taxon>Serpentes</taxon>
        <taxon>Colubroidea</taxon>
        <taxon>Viperidae</taxon>
        <taxon>Crotalinae</taxon>
        <taxon>Protobothrops</taxon>
    </lineage>
</organism>
<comment type="function">
    <text>PLA2 catalyzes the calcium-dependent hydrolysis of the 2-acyl groups in 3-sn-phosphoglycerides.</text>
</comment>
<comment type="catalytic activity">
    <reaction evidence="3">
        <text>a 1,2-diacyl-sn-glycero-3-phosphocholine + H2O = a 1-acyl-sn-glycero-3-phosphocholine + a fatty acid + H(+)</text>
        <dbReference type="Rhea" id="RHEA:15801"/>
        <dbReference type="ChEBI" id="CHEBI:15377"/>
        <dbReference type="ChEBI" id="CHEBI:15378"/>
        <dbReference type="ChEBI" id="CHEBI:28868"/>
        <dbReference type="ChEBI" id="CHEBI:57643"/>
        <dbReference type="ChEBI" id="CHEBI:58168"/>
        <dbReference type="EC" id="3.1.1.4"/>
    </reaction>
</comment>
<comment type="cofactor">
    <cofactor evidence="1">
        <name>Ca(2+)</name>
        <dbReference type="ChEBI" id="CHEBI:29108"/>
    </cofactor>
    <text evidence="1">Binds 1 Ca(2+) ion.</text>
</comment>
<comment type="subcellular location">
    <subcellularLocation>
        <location>Secreted</location>
    </subcellularLocation>
</comment>
<comment type="tissue specificity">
    <text>Expressed by the venom gland.</text>
</comment>
<comment type="similarity">
    <text evidence="4">Belongs to the phospholipase A2 family. Group II subfamily. D49 sub-subfamily.</text>
</comment>
<proteinExistence type="evidence at protein level"/>
<name>PA2BX_PROFL</name>
<feature type="chain" id="PRO_0000161701" description="Basic phospholipase A2 PL-X">
    <location>
        <begin position="1"/>
        <end position="122"/>
    </location>
</feature>
<feature type="active site" evidence="3">
    <location>
        <position position="47"/>
    </location>
</feature>
<feature type="active site" evidence="3">
    <location>
        <position position="89"/>
    </location>
</feature>
<feature type="binding site" evidence="2">
    <location>
        <position position="27"/>
    </location>
    <ligand>
        <name>Ca(2+)</name>
        <dbReference type="ChEBI" id="CHEBI:29108"/>
    </ligand>
</feature>
<feature type="binding site" evidence="2">
    <location>
        <position position="29"/>
    </location>
    <ligand>
        <name>Ca(2+)</name>
        <dbReference type="ChEBI" id="CHEBI:29108"/>
    </ligand>
</feature>
<feature type="binding site" evidence="2">
    <location>
        <position position="31"/>
    </location>
    <ligand>
        <name>Ca(2+)</name>
        <dbReference type="ChEBI" id="CHEBI:29108"/>
    </ligand>
</feature>
<feature type="binding site" evidence="2">
    <location>
        <position position="48"/>
    </location>
    <ligand>
        <name>Ca(2+)</name>
        <dbReference type="ChEBI" id="CHEBI:29108"/>
    </ligand>
</feature>
<feature type="disulfide bond" evidence="2">
    <location>
        <begin position="26"/>
        <end position="115"/>
    </location>
</feature>
<feature type="disulfide bond" evidence="2">
    <location>
        <begin position="28"/>
        <end position="44"/>
    </location>
</feature>
<feature type="disulfide bond" evidence="2">
    <location>
        <begin position="43"/>
        <end position="95"/>
    </location>
</feature>
<feature type="disulfide bond" evidence="2">
    <location>
        <begin position="49"/>
        <end position="122"/>
    </location>
</feature>
<feature type="disulfide bond" evidence="2">
    <location>
        <begin position="50"/>
        <end position="88"/>
    </location>
</feature>
<feature type="disulfide bond" evidence="2">
    <location>
        <begin position="57"/>
        <end position="81"/>
    </location>
</feature>
<feature type="disulfide bond" evidence="2">
    <location>
        <begin position="75"/>
        <end position="86"/>
    </location>
</feature>
<accession>P06860</accession>
<dbReference type="EC" id="3.1.1.4"/>
<dbReference type="PIR" id="A25500">
    <property type="entry name" value="PSTVXF"/>
</dbReference>
<dbReference type="SMR" id="P06860"/>
<dbReference type="GO" id="GO:0005576">
    <property type="term" value="C:extracellular region"/>
    <property type="evidence" value="ECO:0007669"/>
    <property type="project" value="UniProtKB-SubCell"/>
</dbReference>
<dbReference type="GO" id="GO:0005509">
    <property type="term" value="F:calcium ion binding"/>
    <property type="evidence" value="ECO:0007669"/>
    <property type="project" value="InterPro"/>
</dbReference>
<dbReference type="GO" id="GO:0047498">
    <property type="term" value="F:calcium-dependent phospholipase A2 activity"/>
    <property type="evidence" value="ECO:0007669"/>
    <property type="project" value="TreeGrafter"/>
</dbReference>
<dbReference type="GO" id="GO:0005543">
    <property type="term" value="F:phospholipid binding"/>
    <property type="evidence" value="ECO:0007669"/>
    <property type="project" value="TreeGrafter"/>
</dbReference>
<dbReference type="GO" id="GO:0090729">
    <property type="term" value="F:toxin activity"/>
    <property type="evidence" value="ECO:0007669"/>
    <property type="project" value="UniProtKB-KW"/>
</dbReference>
<dbReference type="GO" id="GO:0050482">
    <property type="term" value="P:arachidonate secretion"/>
    <property type="evidence" value="ECO:0007669"/>
    <property type="project" value="InterPro"/>
</dbReference>
<dbReference type="GO" id="GO:0016042">
    <property type="term" value="P:lipid catabolic process"/>
    <property type="evidence" value="ECO:0007669"/>
    <property type="project" value="UniProtKB-KW"/>
</dbReference>
<dbReference type="GO" id="GO:0042130">
    <property type="term" value="P:negative regulation of T cell proliferation"/>
    <property type="evidence" value="ECO:0007669"/>
    <property type="project" value="TreeGrafter"/>
</dbReference>
<dbReference type="GO" id="GO:0006644">
    <property type="term" value="P:phospholipid metabolic process"/>
    <property type="evidence" value="ECO:0007669"/>
    <property type="project" value="InterPro"/>
</dbReference>
<dbReference type="CDD" id="cd00125">
    <property type="entry name" value="PLA2c"/>
    <property type="match status" value="1"/>
</dbReference>
<dbReference type="FunFam" id="1.20.90.10:FF:000001">
    <property type="entry name" value="Basic phospholipase A2 homolog"/>
    <property type="match status" value="1"/>
</dbReference>
<dbReference type="Gene3D" id="1.20.90.10">
    <property type="entry name" value="Phospholipase A2 domain"/>
    <property type="match status" value="1"/>
</dbReference>
<dbReference type="InterPro" id="IPR001211">
    <property type="entry name" value="PLipase_A2"/>
</dbReference>
<dbReference type="InterPro" id="IPR016090">
    <property type="entry name" value="PLipase_A2_dom"/>
</dbReference>
<dbReference type="InterPro" id="IPR036444">
    <property type="entry name" value="PLipase_A2_dom_sf"/>
</dbReference>
<dbReference type="InterPro" id="IPR033113">
    <property type="entry name" value="PLipase_A2_His_AS"/>
</dbReference>
<dbReference type="PANTHER" id="PTHR11716">
    <property type="entry name" value="PHOSPHOLIPASE A2 FAMILY MEMBER"/>
    <property type="match status" value="1"/>
</dbReference>
<dbReference type="PANTHER" id="PTHR11716:SF9">
    <property type="entry name" value="PHOSPHOLIPASE A2, MEMBRANE ASSOCIATED"/>
    <property type="match status" value="1"/>
</dbReference>
<dbReference type="Pfam" id="PF00068">
    <property type="entry name" value="Phospholip_A2_1"/>
    <property type="match status" value="1"/>
</dbReference>
<dbReference type="PRINTS" id="PR00389">
    <property type="entry name" value="PHPHLIPASEA2"/>
</dbReference>
<dbReference type="SMART" id="SM00085">
    <property type="entry name" value="PA2c"/>
    <property type="match status" value="1"/>
</dbReference>
<dbReference type="SUPFAM" id="SSF48619">
    <property type="entry name" value="Phospholipase A2, PLA2"/>
    <property type="match status" value="1"/>
</dbReference>
<dbReference type="PROSITE" id="PS00118">
    <property type="entry name" value="PA2_HIS"/>
    <property type="match status" value="1"/>
</dbReference>
<reference key="1">
    <citation type="journal article" date="1986" name="Toxicon">
        <title>Comparison of amino terminal region of three isoenzymes of phospholipases A2 (TFV PL-Ia, TFV PL-Ib, TFV PL-X) from Trimeresurus flavoviridis (habu snake) venom and the complete amino acid sequence of the basic phospholipase, TFV PL-X.</title>
        <authorList>
            <person name="Kini R.M."/>
            <person name="Kawabata S."/>
            <person name="Iwanaga S."/>
        </authorList>
    </citation>
    <scope>PROTEIN SEQUENCE</scope>
    <source>
        <tissue>Venom</tissue>
    </source>
</reference>
<keyword id="KW-0106">Calcium</keyword>
<keyword id="KW-0903">Direct protein sequencing</keyword>
<keyword id="KW-1015">Disulfide bond</keyword>
<keyword id="KW-0378">Hydrolase</keyword>
<keyword id="KW-0442">Lipid degradation</keyword>
<keyword id="KW-0443">Lipid metabolism</keyword>
<keyword id="KW-0479">Metal-binding</keyword>
<keyword id="KW-0964">Secreted</keyword>
<keyword id="KW-0800">Toxin</keyword>
<evidence type="ECO:0000250" key="1"/>
<evidence type="ECO:0000250" key="2">
    <source>
        <dbReference type="UniProtKB" id="O42187"/>
    </source>
</evidence>
<evidence type="ECO:0000255" key="3">
    <source>
        <dbReference type="PROSITE-ProRule" id="PRU10035"/>
    </source>
</evidence>
<evidence type="ECO:0000305" key="4"/>
<protein>
    <recommendedName>
        <fullName>Basic phospholipase A2 PL-X</fullName>
        <shortName>svPLA2</shortName>
        <ecNumber>3.1.1.4</ecNumber>
    </recommendedName>
    <alternativeName>
        <fullName>Phosphatidylcholine 2-acylhydrolase</fullName>
    </alternativeName>
</protein>